<name>CO1E_CONMR</name>
<feature type="signal peptide" evidence="1">
    <location>
        <begin position="1"/>
        <end position="17"/>
    </location>
</feature>
<feature type="propeptide" id="PRO_0000451773" evidence="5">
    <location>
        <begin position="18"/>
        <end position="51"/>
    </location>
</feature>
<feature type="peptide" id="PRO_0000396800" description="Conotoxin Mr1e" evidence="2">
    <location>
        <begin position="52"/>
        <end position="62"/>
    </location>
</feature>
<feature type="disulfide bond" evidence="2">
    <location>
        <begin position="52"/>
        <end position="62"/>
    </location>
</feature>
<feature type="disulfide bond" evidence="2">
    <location>
        <begin position="53"/>
        <end position="58"/>
    </location>
</feature>
<accession>P0CH14</accession>
<accession>U6BZE4</accession>
<dbReference type="EMBL" id="AB850745">
    <property type="protein sequence ID" value="BAO02125.1"/>
    <property type="molecule type" value="mRNA"/>
</dbReference>
<dbReference type="GO" id="GO:0005576">
    <property type="term" value="C:extracellular region"/>
    <property type="evidence" value="ECO:0007669"/>
    <property type="project" value="UniProtKB-SubCell"/>
</dbReference>
<dbReference type="GO" id="GO:0008200">
    <property type="term" value="F:ion channel inhibitor activity"/>
    <property type="evidence" value="ECO:0007669"/>
    <property type="project" value="InterPro"/>
</dbReference>
<dbReference type="GO" id="GO:0090729">
    <property type="term" value="F:toxin activity"/>
    <property type="evidence" value="ECO:0007669"/>
    <property type="project" value="UniProtKB-KW"/>
</dbReference>
<dbReference type="InterPro" id="IPR004214">
    <property type="entry name" value="Conotoxin"/>
</dbReference>
<dbReference type="Pfam" id="PF02950">
    <property type="entry name" value="Conotoxin"/>
    <property type="match status" value="1"/>
</dbReference>
<evidence type="ECO:0000255" key="1"/>
<evidence type="ECO:0000269" key="2">
    <source>
    </source>
</evidence>
<evidence type="ECO:0000303" key="3">
    <source>
    </source>
</evidence>
<evidence type="ECO:0000305" key="4"/>
<evidence type="ECO:0000305" key="5">
    <source>
    </source>
</evidence>
<evidence type="ECO:0000312" key="6">
    <source>
        <dbReference type="EMBL" id="BAO02125.1"/>
    </source>
</evidence>
<organism>
    <name type="scientific">Conus marmoreus</name>
    <name type="common">Marble cone</name>
    <dbReference type="NCBI Taxonomy" id="42752"/>
    <lineage>
        <taxon>Eukaryota</taxon>
        <taxon>Metazoa</taxon>
        <taxon>Spiralia</taxon>
        <taxon>Lophotrochozoa</taxon>
        <taxon>Mollusca</taxon>
        <taxon>Gastropoda</taxon>
        <taxon>Caenogastropoda</taxon>
        <taxon>Neogastropoda</taxon>
        <taxon>Conoidea</taxon>
        <taxon>Conidae</taxon>
        <taxon>Conus</taxon>
    </lineage>
</organism>
<protein>
    <recommendedName>
        <fullName evidence="3">Conotoxin Mr1e</fullName>
    </recommendedName>
    <alternativeName>
        <fullName evidence="6">Mr051</fullName>
    </alternativeName>
</protein>
<proteinExistence type="evidence at protein level"/>
<keyword id="KW-0165">Cleavage on pair of basic residues</keyword>
<keyword id="KW-0903">Direct protein sequencing</keyword>
<keyword id="KW-1015">Disulfide bond</keyword>
<keyword id="KW-0528">Neurotoxin</keyword>
<keyword id="KW-0964">Secreted</keyword>
<keyword id="KW-0732">Signal</keyword>
<keyword id="KW-0800">Toxin</keyword>
<sequence>MGVVLFIFLVLFPLATLQLDADQPVERHAENKQLLNPDERRGIILHALRKRCCHSSWCKHLC</sequence>
<comment type="function">
    <text evidence="2">Shows excitatory effect on mice by intracranial injection, followed by rigid paralysis of the rear legs and recovering after 30 min.</text>
</comment>
<comment type="subcellular location">
    <subcellularLocation>
        <location evidence="2">Secreted</location>
    </subcellularLocation>
</comment>
<comment type="tissue specificity">
    <text evidence="5">Expressed by the venom duct.</text>
</comment>
<comment type="domain">
    <text evidence="4">The cysteine framework is I (CC-C-C). Alpha4/3 pattern.</text>
</comment>
<comment type="mass spectrometry"/>
<comment type="similarity">
    <text evidence="4">Belongs to the conotoxin M superfamily.</text>
</comment>
<reference key="1">
    <citation type="journal article" date="2013" name="BMC Genomics">
        <title>Systematic interrogation of the Conus marmoreus venom duct transcriptome with ConoSorter reveals 158 novel conotoxins and 13 new gene superfamilies.</title>
        <authorList>
            <person name="Lavergne V."/>
            <person name="Dutertre S."/>
            <person name="Jin A."/>
            <person name="Lewis R.J."/>
            <person name="Taft R.J."/>
            <person name="Alewood P.F."/>
        </authorList>
    </citation>
    <scope>NUCLEOTIDE SEQUENCE [MRNA]</scope>
</reference>
<reference key="2">
    <citation type="journal article" date="2008" name="Acta Biochim. Biophys. Sin.">
        <title>mr1e, a conotoxin from Conus marmoreus with a novel disulfide pattern.</title>
        <authorList>
            <person name="Wang Y."/>
            <person name="Shao X."/>
            <person name="Li M."/>
            <person name="Wang S."/>
            <person name="Chi C."/>
            <person name="Wang C."/>
        </authorList>
    </citation>
    <scope>PROTEIN SEQUENCE OF 52-62</scope>
    <scope>MASS SPECTROMETRY</scope>
    <scope>FUNCTION</scope>
    <scope>SUBCELLULAR LOCATION</scope>
    <scope>DISULFIDE BONDS</scope>
    <source>
        <tissue>Venom</tissue>
    </source>
</reference>